<comment type="similarity">
    <text evidence="1">Belongs to the bacterial ribosomal protein bL35 family.</text>
</comment>
<proteinExistence type="inferred from homology"/>
<gene>
    <name evidence="1" type="primary">rpmI</name>
    <name type="ordered locus">Smal_2803</name>
</gene>
<evidence type="ECO:0000255" key="1">
    <source>
        <dbReference type="HAMAP-Rule" id="MF_00514"/>
    </source>
</evidence>
<evidence type="ECO:0000305" key="2"/>
<feature type="chain" id="PRO_1000127412" description="Large ribosomal subunit protein bL35">
    <location>
        <begin position="1"/>
        <end position="65"/>
    </location>
</feature>
<name>RL35_STRM5</name>
<organism>
    <name type="scientific">Stenotrophomonas maltophilia (strain R551-3)</name>
    <dbReference type="NCBI Taxonomy" id="391008"/>
    <lineage>
        <taxon>Bacteria</taxon>
        <taxon>Pseudomonadati</taxon>
        <taxon>Pseudomonadota</taxon>
        <taxon>Gammaproteobacteria</taxon>
        <taxon>Lysobacterales</taxon>
        <taxon>Lysobacteraceae</taxon>
        <taxon>Stenotrophomonas</taxon>
        <taxon>Stenotrophomonas maltophilia group</taxon>
    </lineage>
</organism>
<keyword id="KW-0687">Ribonucleoprotein</keyword>
<keyword id="KW-0689">Ribosomal protein</keyword>
<sequence>MPKIKTNRAAAKRFRKTASGKYKCGHANRSHILTKKATKRKRNLRQTGHVRAEDAGRLDRMLPYL</sequence>
<dbReference type="EMBL" id="CP001111">
    <property type="protein sequence ID" value="ACF52503.1"/>
    <property type="molecule type" value="Genomic_DNA"/>
</dbReference>
<dbReference type="RefSeq" id="WP_005410436.1">
    <property type="nucleotide sequence ID" value="NC_011071.1"/>
</dbReference>
<dbReference type="SMR" id="B4SQH2"/>
<dbReference type="STRING" id="391008.Smal_2803"/>
<dbReference type="GeneID" id="97261971"/>
<dbReference type="KEGG" id="smt:Smal_2803"/>
<dbReference type="eggNOG" id="COG0291">
    <property type="taxonomic scope" value="Bacteria"/>
</dbReference>
<dbReference type="HOGENOM" id="CLU_169643_4_3_6"/>
<dbReference type="OrthoDB" id="47476at2"/>
<dbReference type="Proteomes" id="UP000001867">
    <property type="component" value="Chromosome"/>
</dbReference>
<dbReference type="GO" id="GO:0022625">
    <property type="term" value="C:cytosolic large ribosomal subunit"/>
    <property type="evidence" value="ECO:0007669"/>
    <property type="project" value="TreeGrafter"/>
</dbReference>
<dbReference type="GO" id="GO:0003735">
    <property type="term" value="F:structural constituent of ribosome"/>
    <property type="evidence" value="ECO:0007669"/>
    <property type="project" value="InterPro"/>
</dbReference>
<dbReference type="GO" id="GO:0006412">
    <property type="term" value="P:translation"/>
    <property type="evidence" value="ECO:0007669"/>
    <property type="project" value="UniProtKB-UniRule"/>
</dbReference>
<dbReference type="FunFam" id="4.10.410.60:FF:000001">
    <property type="entry name" value="50S ribosomal protein L35"/>
    <property type="match status" value="1"/>
</dbReference>
<dbReference type="Gene3D" id="4.10.410.60">
    <property type="match status" value="1"/>
</dbReference>
<dbReference type="HAMAP" id="MF_00514">
    <property type="entry name" value="Ribosomal_bL35"/>
    <property type="match status" value="1"/>
</dbReference>
<dbReference type="InterPro" id="IPR001706">
    <property type="entry name" value="Ribosomal_bL35"/>
</dbReference>
<dbReference type="InterPro" id="IPR021137">
    <property type="entry name" value="Ribosomal_bL35-like"/>
</dbReference>
<dbReference type="InterPro" id="IPR018265">
    <property type="entry name" value="Ribosomal_bL35_CS"/>
</dbReference>
<dbReference type="InterPro" id="IPR037229">
    <property type="entry name" value="Ribosomal_bL35_sf"/>
</dbReference>
<dbReference type="NCBIfam" id="TIGR00001">
    <property type="entry name" value="rpmI_bact"/>
    <property type="match status" value="1"/>
</dbReference>
<dbReference type="PANTHER" id="PTHR33343">
    <property type="entry name" value="54S RIBOSOMAL PROTEIN BL35M"/>
    <property type="match status" value="1"/>
</dbReference>
<dbReference type="PANTHER" id="PTHR33343:SF1">
    <property type="entry name" value="LARGE RIBOSOMAL SUBUNIT PROTEIN BL35M"/>
    <property type="match status" value="1"/>
</dbReference>
<dbReference type="Pfam" id="PF01632">
    <property type="entry name" value="Ribosomal_L35p"/>
    <property type="match status" value="1"/>
</dbReference>
<dbReference type="PRINTS" id="PR00064">
    <property type="entry name" value="RIBOSOMALL35"/>
</dbReference>
<dbReference type="SUPFAM" id="SSF143034">
    <property type="entry name" value="L35p-like"/>
    <property type="match status" value="1"/>
</dbReference>
<dbReference type="PROSITE" id="PS00936">
    <property type="entry name" value="RIBOSOMAL_L35"/>
    <property type="match status" value="1"/>
</dbReference>
<accession>B4SQH2</accession>
<protein>
    <recommendedName>
        <fullName evidence="1">Large ribosomal subunit protein bL35</fullName>
    </recommendedName>
    <alternativeName>
        <fullName evidence="2">50S ribosomal protein L35</fullName>
    </alternativeName>
</protein>
<reference key="1">
    <citation type="submission" date="2008-06" db="EMBL/GenBank/DDBJ databases">
        <title>Complete sequence of Stenotrophomonas maltophilia R551-3.</title>
        <authorList>
            <consortium name="US DOE Joint Genome Institute"/>
            <person name="Lucas S."/>
            <person name="Copeland A."/>
            <person name="Lapidus A."/>
            <person name="Glavina del Rio T."/>
            <person name="Dalin E."/>
            <person name="Tice H."/>
            <person name="Pitluck S."/>
            <person name="Chain P."/>
            <person name="Malfatti S."/>
            <person name="Shin M."/>
            <person name="Vergez L."/>
            <person name="Lang D."/>
            <person name="Schmutz J."/>
            <person name="Larimer F."/>
            <person name="Land M."/>
            <person name="Hauser L."/>
            <person name="Kyrpides N."/>
            <person name="Mikhailova N."/>
            <person name="Taghavi S."/>
            <person name="Monchy S."/>
            <person name="Newman L."/>
            <person name="Vangronsveld J."/>
            <person name="van der Lelie D."/>
            <person name="Richardson P."/>
        </authorList>
    </citation>
    <scope>NUCLEOTIDE SEQUENCE [LARGE SCALE GENOMIC DNA]</scope>
    <source>
        <strain>R551-3</strain>
    </source>
</reference>